<organism>
    <name type="scientific">Yersinia pestis (strain Pestoides F)</name>
    <dbReference type="NCBI Taxonomy" id="386656"/>
    <lineage>
        <taxon>Bacteria</taxon>
        <taxon>Pseudomonadati</taxon>
        <taxon>Pseudomonadota</taxon>
        <taxon>Gammaproteobacteria</taxon>
        <taxon>Enterobacterales</taxon>
        <taxon>Yersiniaceae</taxon>
        <taxon>Yersinia</taxon>
    </lineage>
</organism>
<gene>
    <name evidence="1" type="primary">rsmJ</name>
    <name type="ordered locus">YPDSF_3338</name>
</gene>
<name>RSMJ_YERPP</name>
<feature type="chain" id="PRO_0000296969" description="Ribosomal RNA small subunit methyltransferase J">
    <location>
        <begin position="1"/>
        <end position="256"/>
    </location>
</feature>
<feature type="binding site" evidence="1">
    <location>
        <begin position="104"/>
        <end position="105"/>
    </location>
    <ligand>
        <name>S-adenosyl-L-methionine</name>
        <dbReference type="ChEBI" id="CHEBI:59789"/>
    </ligand>
</feature>
<feature type="binding site" evidence="1">
    <location>
        <begin position="120"/>
        <end position="121"/>
    </location>
    <ligand>
        <name>S-adenosyl-L-methionine</name>
        <dbReference type="ChEBI" id="CHEBI:59789"/>
    </ligand>
</feature>
<feature type="binding site" evidence="1">
    <location>
        <begin position="156"/>
        <end position="157"/>
    </location>
    <ligand>
        <name>S-adenosyl-L-methionine</name>
        <dbReference type="ChEBI" id="CHEBI:59789"/>
    </ligand>
</feature>
<feature type="binding site" evidence="1">
    <location>
        <position position="174"/>
    </location>
    <ligand>
        <name>S-adenosyl-L-methionine</name>
        <dbReference type="ChEBI" id="CHEBI:59789"/>
    </ligand>
</feature>
<dbReference type="EC" id="2.1.1.242" evidence="1"/>
<dbReference type="EMBL" id="CP000668">
    <property type="protein sequence ID" value="ABP41693.1"/>
    <property type="molecule type" value="Genomic_DNA"/>
</dbReference>
<dbReference type="RefSeq" id="WP_002215483.1">
    <property type="nucleotide sequence ID" value="NZ_CP009715.1"/>
</dbReference>
<dbReference type="SMR" id="A4TQY1"/>
<dbReference type="GeneID" id="96663312"/>
<dbReference type="KEGG" id="ypp:YPDSF_3338"/>
<dbReference type="PATRIC" id="fig|386656.14.peg.994"/>
<dbReference type="GO" id="GO:0005737">
    <property type="term" value="C:cytoplasm"/>
    <property type="evidence" value="ECO:0007669"/>
    <property type="project" value="UniProtKB-SubCell"/>
</dbReference>
<dbReference type="GO" id="GO:0008990">
    <property type="term" value="F:rRNA (guanine-N2-)-methyltransferase activity"/>
    <property type="evidence" value="ECO:0007669"/>
    <property type="project" value="UniProtKB-UniRule"/>
</dbReference>
<dbReference type="CDD" id="cd02440">
    <property type="entry name" value="AdoMet_MTases"/>
    <property type="match status" value="1"/>
</dbReference>
<dbReference type="Gene3D" id="3.40.50.150">
    <property type="entry name" value="Vaccinia Virus protein VP39"/>
    <property type="match status" value="1"/>
</dbReference>
<dbReference type="Gene3D" id="3.40.1630.10">
    <property type="entry name" value="YhiQ-like domain"/>
    <property type="match status" value="1"/>
</dbReference>
<dbReference type="HAMAP" id="MF_01523">
    <property type="entry name" value="16SrRNA_methyltr_J"/>
    <property type="match status" value="1"/>
</dbReference>
<dbReference type="InterPro" id="IPR007536">
    <property type="entry name" value="16SrRNA_methylTrfase_J"/>
</dbReference>
<dbReference type="InterPro" id="IPR029063">
    <property type="entry name" value="SAM-dependent_MTases_sf"/>
</dbReference>
<dbReference type="NCBIfam" id="NF008012">
    <property type="entry name" value="PRK10742.1"/>
    <property type="match status" value="1"/>
</dbReference>
<dbReference type="PANTHER" id="PTHR36112">
    <property type="entry name" value="RIBOSOMAL RNA SMALL SUBUNIT METHYLTRANSFERASE J"/>
    <property type="match status" value="1"/>
</dbReference>
<dbReference type="PANTHER" id="PTHR36112:SF1">
    <property type="entry name" value="RIBOSOMAL RNA SMALL SUBUNIT METHYLTRANSFERASE J"/>
    <property type="match status" value="1"/>
</dbReference>
<dbReference type="Pfam" id="PF04445">
    <property type="entry name" value="SAM_MT"/>
    <property type="match status" value="1"/>
</dbReference>
<dbReference type="SUPFAM" id="SSF53335">
    <property type="entry name" value="S-adenosyl-L-methionine-dependent methyltransferases"/>
    <property type="match status" value="1"/>
</dbReference>
<evidence type="ECO:0000255" key="1">
    <source>
        <dbReference type="HAMAP-Rule" id="MF_01523"/>
    </source>
</evidence>
<accession>A4TQY1</accession>
<sequence length="256" mass="27595">MSHVSICLLSEAGADPGALSILADRWGLVSDDQAVMALVLTAERLELRKRDEPKLGGIYVDFVSGTQAHRRKFGGGRGEAVAKAVGIKKGYLPRVVDATAGLGRDAFVLAALGCQVQMLERNPVVAALLDDGLRRGYLDAEIGPWLRERLTLLHASSLTALVAIEPRPEVVYLDPMYPHRQKSALVKKEMRVFQSLVGADNDADGLLAPARALATKRVVVKRPDYAEPLAGVAAQAAVVTKSHRFDIYPSSVTPPR</sequence>
<proteinExistence type="inferred from homology"/>
<keyword id="KW-0963">Cytoplasm</keyword>
<keyword id="KW-0489">Methyltransferase</keyword>
<keyword id="KW-0698">rRNA processing</keyword>
<keyword id="KW-0949">S-adenosyl-L-methionine</keyword>
<keyword id="KW-0808">Transferase</keyword>
<comment type="function">
    <text evidence="1">Specifically methylates the guanosine in position 1516 of 16S rRNA.</text>
</comment>
<comment type="catalytic activity">
    <reaction evidence="1">
        <text>guanosine(1516) in 16S rRNA + S-adenosyl-L-methionine = N(2)-methylguanosine(1516) in 16S rRNA + S-adenosyl-L-homocysteine + H(+)</text>
        <dbReference type="Rhea" id="RHEA:43220"/>
        <dbReference type="Rhea" id="RHEA-COMP:10412"/>
        <dbReference type="Rhea" id="RHEA-COMP:10413"/>
        <dbReference type="ChEBI" id="CHEBI:15378"/>
        <dbReference type="ChEBI" id="CHEBI:57856"/>
        <dbReference type="ChEBI" id="CHEBI:59789"/>
        <dbReference type="ChEBI" id="CHEBI:74269"/>
        <dbReference type="ChEBI" id="CHEBI:74481"/>
        <dbReference type="EC" id="2.1.1.242"/>
    </reaction>
</comment>
<comment type="subcellular location">
    <subcellularLocation>
        <location evidence="1">Cytoplasm</location>
    </subcellularLocation>
</comment>
<comment type="similarity">
    <text evidence="1">Belongs to the methyltransferase superfamily. RsmJ family.</text>
</comment>
<reference key="1">
    <citation type="submission" date="2007-02" db="EMBL/GenBank/DDBJ databases">
        <title>Complete sequence of chromosome of Yersinia pestis Pestoides F.</title>
        <authorList>
            <consortium name="US DOE Joint Genome Institute"/>
            <person name="Copeland A."/>
            <person name="Lucas S."/>
            <person name="Lapidus A."/>
            <person name="Barry K."/>
            <person name="Detter J.C."/>
            <person name="Glavina del Rio T."/>
            <person name="Hammon N."/>
            <person name="Israni S."/>
            <person name="Dalin E."/>
            <person name="Tice H."/>
            <person name="Pitluck S."/>
            <person name="Di Bartolo G."/>
            <person name="Chain P."/>
            <person name="Malfatti S."/>
            <person name="Shin M."/>
            <person name="Vergez L."/>
            <person name="Schmutz J."/>
            <person name="Larimer F."/>
            <person name="Land M."/>
            <person name="Hauser L."/>
            <person name="Worsham P."/>
            <person name="Chu M."/>
            <person name="Bearden S."/>
            <person name="Garcia E."/>
            <person name="Richardson P."/>
        </authorList>
    </citation>
    <scope>NUCLEOTIDE SEQUENCE [LARGE SCALE GENOMIC DNA]</scope>
    <source>
        <strain>Pestoides F</strain>
    </source>
</reference>
<protein>
    <recommendedName>
        <fullName evidence="1">Ribosomal RNA small subunit methyltransferase J</fullName>
        <ecNumber evidence="1">2.1.1.242</ecNumber>
    </recommendedName>
    <alternativeName>
        <fullName evidence="1">16S rRNA m2G1516 methyltransferase</fullName>
    </alternativeName>
    <alternativeName>
        <fullName evidence="1">rRNA (guanine-N(2)-)-methyltransferase</fullName>
    </alternativeName>
</protein>